<proteinExistence type="inferred from homology"/>
<name>PTH_PHYAS</name>
<accession>B1VAH1</accession>
<dbReference type="EC" id="3.1.1.29" evidence="1"/>
<dbReference type="EMBL" id="AM422018">
    <property type="protein sequence ID" value="CAM11944.1"/>
    <property type="molecule type" value="Genomic_DNA"/>
</dbReference>
<dbReference type="SMR" id="B1VAH1"/>
<dbReference type="STRING" id="59748.PA0610"/>
<dbReference type="KEGG" id="pal:PA0610"/>
<dbReference type="eggNOG" id="COG0193">
    <property type="taxonomic scope" value="Bacteria"/>
</dbReference>
<dbReference type="Proteomes" id="UP000008323">
    <property type="component" value="Chromosome"/>
</dbReference>
<dbReference type="GO" id="GO:0005737">
    <property type="term" value="C:cytoplasm"/>
    <property type="evidence" value="ECO:0007669"/>
    <property type="project" value="UniProtKB-SubCell"/>
</dbReference>
<dbReference type="GO" id="GO:0004045">
    <property type="term" value="F:peptidyl-tRNA hydrolase activity"/>
    <property type="evidence" value="ECO:0007669"/>
    <property type="project" value="UniProtKB-UniRule"/>
</dbReference>
<dbReference type="GO" id="GO:0000049">
    <property type="term" value="F:tRNA binding"/>
    <property type="evidence" value="ECO:0007669"/>
    <property type="project" value="UniProtKB-UniRule"/>
</dbReference>
<dbReference type="GO" id="GO:0006515">
    <property type="term" value="P:protein quality control for misfolded or incompletely synthesized proteins"/>
    <property type="evidence" value="ECO:0007669"/>
    <property type="project" value="UniProtKB-UniRule"/>
</dbReference>
<dbReference type="GO" id="GO:0072344">
    <property type="term" value="P:rescue of stalled ribosome"/>
    <property type="evidence" value="ECO:0007669"/>
    <property type="project" value="UniProtKB-UniRule"/>
</dbReference>
<dbReference type="CDD" id="cd00462">
    <property type="entry name" value="PTH"/>
    <property type="match status" value="1"/>
</dbReference>
<dbReference type="Gene3D" id="3.40.50.1470">
    <property type="entry name" value="Peptidyl-tRNA hydrolase"/>
    <property type="match status" value="1"/>
</dbReference>
<dbReference type="HAMAP" id="MF_00083">
    <property type="entry name" value="Pept_tRNA_hydro_bact"/>
    <property type="match status" value="1"/>
</dbReference>
<dbReference type="InterPro" id="IPR001328">
    <property type="entry name" value="Pept_tRNA_hydro"/>
</dbReference>
<dbReference type="InterPro" id="IPR018171">
    <property type="entry name" value="Pept_tRNA_hydro_CS"/>
</dbReference>
<dbReference type="InterPro" id="IPR036416">
    <property type="entry name" value="Pept_tRNA_hydro_sf"/>
</dbReference>
<dbReference type="NCBIfam" id="TIGR00447">
    <property type="entry name" value="pth"/>
    <property type="match status" value="1"/>
</dbReference>
<dbReference type="PANTHER" id="PTHR17224">
    <property type="entry name" value="PEPTIDYL-TRNA HYDROLASE"/>
    <property type="match status" value="1"/>
</dbReference>
<dbReference type="PANTHER" id="PTHR17224:SF1">
    <property type="entry name" value="PEPTIDYL-TRNA HYDROLASE"/>
    <property type="match status" value="1"/>
</dbReference>
<dbReference type="Pfam" id="PF01195">
    <property type="entry name" value="Pept_tRNA_hydro"/>
    <property type="match status" value="1"/>
</dbReference>
<dbReference type="SUPFAM" id="SSF53178">
    <property type="entry name" value="Peptidyl-tRNA hydrolase-like"/>
    <property type="match status" value="1"/>
</dbReference>
<dbReference type="PROSITE" id="PS01196">
    <property type="entry name" value="PEPT_TRNA_HYDROL_2"/>
    <property type="match status" value="1"/>
</dbReference>
<feature type="chain" id="PRO_1000192972" description="Peptidyl-tRNA hydrolase">
    <location>
        <begin position="1"/>
        <end position="189"/>
    </location>
</feature>
<feature type="active site" description="Proton acceptor" evidence="1">
    <location>
        <position position="20"/>
    </location>
</feature>
<feature type="binding site" evidence="1">
    <location>
        <position position="15"/>
    </location>
    <ligand>
        <name>tRNA</name>
        <dbReference type="ChEBI" id="CHEBI:17843"/>
    </ligand>
</feature>
<feature type="binding site" evidence="1">
    <location>
        <position position="65"/>
    </location>
    <ligand>
        <name>tRNA</name>
        <dbReference type="ChEBI" id="CHEBI:17843"/>
    </ligand>
</feature>
<feature type="binding site" evidence="1">
    <location>
        <position position="67"/>
    </location>
    <ligand>
        <name>tRNA</name>
        <dbReference type="ChEBI" id="CHEBI:17843"/>
    </ligand>
</feature>
<feature type="binding site" evidence="1">
    <location>
        <position position="113"/>
    </location>
    <ligand>
        <name>tRNA</name>
        <dbReference type="ChEBI" id="CHEBI:17843"/>
    </ligand>
</feature>
<feature type="site" description="Discriminates between blocked and unblocked aminoacyl-tRNA" evidence="1">
    <location>
        <position position="10"/>
    </location>
</feature>
<feature type="site" description="Stabilizes the basic form of H active site to accept a proton" evidence="1">
    <location>
        <position position="92"/>
    </location>
</feature>
<gene>
    <name evidence="1" type="primary">pth</name>
    <name type="ordered locus">PA0610</name>
</gene>
<keyword id="KW-0963">Cytoplasm</keyword>
<keyword id="KW-0378">Hydrolase</keyword>
<keyword id="KW-1185">Reference proteome</keyword>
<keyword id="KW-0694">RNA-binding</keyword>
<keyword id="KW-0820">tRNA-binding</keyword>
<protein>
    <recommendedName>
        <fullName evidence="1">Peptidyl-tRNA hydrolase</fullName>
        <shortName evidence="1">Pth</shortName>
        <ecNumber evidence="1">3.1.1.29</ecNumber>
    </recommendedName>
</protein>
<evidence type="ECO:0000255" key="1">
    <source>
        <dbReference type="HAMAP-Rule" id="MF_00083"/>
    </source>
</evidence>
<organism>
    <name type="scientific">Phytoplasma australiense</name>
    <dbReference type="NCBI Taxonomy" id="59748"/>
    <lineage>
        <taxon>Bacteria</taxon>
        <taxon>Bacillati</taxon>
        <taxon>Mycoplasmatota</taxon>
        <taxon>Mollicutes</taxon>
        <taxon>Acholeplasmatales</taxon>
        <taxon>Acholeplasmataceae</taxon>
        <taxon>Candidatus Phytoplasma</taxon>
        <taxon>16SrXII (Stolbur group)</taxon>
    </lineage>
</organism>
<sequence length="189" mass="21787">MKKIIIGLGNPGKEFQNTYHNIGFLALESFLKNNKHQMIPNSYQGHLYQIQLNNCISFLVKPQMYMNSSGKVVKKILDAYQIKIEDILVILDDIYLPEGKIKLRPQGGHAGHNGLRNIIECCNTNKFKRLKIGVGYDSNIPLNQYLLTPFNLHQKKQILQNIDKIHEIMSKFIQGISFNNLMNQYNVIK</sequence>
<reference key="1">
    <citation type="journal article" date="2008" name="J. Bacteriol.">
        <title>Comparative genome analysis of 'Candidatus Phytoplasma australiense' (subgroup tuf-Australia I; rp-A) and 'Ca. Phytoplasma asteris' strains OY-M and AY-WB.</title>
        <authorList>
            <person name="Tran-Nguyen L.T."/>
            <person name="Kube M."/>
            <person name="Schneider B."/>
            <person name="Reinhardt R."/>
            <person name="Gibb K.S."/>
        </authorList>
    </citation>
    <scope>NUCLEOTIDE SEQUENCE [LARGE SCALE GENOMIC DNA]</scope>
</reference>
<comment type="function">
    <text evidence="1">Hydrolyzes ribosome-free peptidyl-tRNAs (with 1 or more amino acids incorporated), which drop off the ribosome during protein synthesis, or as a result of ribosome stalling.</text>
</comment>
<comment type="function">
    <text evidence="1">Catalyzes the release of premature peptidyl moieties from peptidyl-tRNA molecules trapped in stalled 50S ribosomal subunits, and thus maintains levels of free tRNAs and 50S ribosomes.</text>
</comment>
<comment type="catalytic activity">
    <reaction evidence="1">
        <text>an N-acyl-L-alpha-aminoacyl-tRNA + H2O = an N-acyl-L-amino acid + a tRNA + H(+)</text>
        <dbReference type="Rhea" id="RHEA:54448"/>
        <dbReference type="Rhea" id="RHEA-COMP:10123"/>
        <dbReference type="Rhea" id="RHEA-COMP:13883"/>
        <dbReference type="ChEBI" id="CHEBI:15377"/>
        <dbReference type="ChEBI" id="CHEBI:15378"/>
        <dbReference type="ChEBI" id="CHEBI:59874"/>
        <dbReference type="ChEBI" id="CHEBI:78442"/>
        <dbReference type="ChEBI" id="CHEBI:138191"/>
        <dbReference type="EC" id="3.1.1.29"/>
    </reaction>
</comment>
<comment type="subunit">
    <text evidence="1">Monomer.</text>
</comment>
<comment type="subcellular location">
    <subcellularLocation>
        <location evidence="1">Cytoplasm</location>
    </subcellularLocation>
</comment>
<comment type="similarity">
    <text evidence="1">Belongs to the PTH family.</text>
</comment>